<protein>
    <recommendedName>
        <fullName>Uncharacterized protein ycf37</fullName>
    </recommendedName>
</protein>
<comment type="subcellular location">
    <subcellularLocation>
        <location>Plastid</location>
        <location>Chloroplast</location>
    </subcellularLocation>
</comment>
<comment type="similarity">
    <text evidence="1">Belongs to the ycf37 family.</text>
</comment>
<keyword id="KW-0150">Chloroplast</keyword>
<keyword id="KW-0934">Plastid</keyword>
<keyword id="KW-0677">Repeat</keyword>
<keyword id="KW-0802">TPR repeat</keyword>
<sequence>MSFLLPFLYVSGLSLILLFILVFIISQIWSRRTADLRLVSIQEKIRNAKADGKDFYELGVIFLSKKLYDQAIINFRYALNLWELDDKTGLANLYNTIGFTYTQIAQYDLALFYYEKALLHEPNYLVTLKNIGFIYEKTNNLVKAKDIYLQILKYDVDNKFATDKLNLLTGRLIRDDRI</sequence>
<name>YCF37_GUITH</name>
<dbReference type="EMBL" id="AF041468">
    <property type="protein sequence ID" value="AAC35649.1"/>
    <property type="molecule type" value="Genomic_DNA"/>
</dbReference>
<dbReference type="RefSeq" id="NP_050715.1">
    <property type="nucleotide sequence ID" value="NC_000926.1"/>
</dbReference>
<dbReference type="SMR" id="O78458"/>
<dbReference type="GeneID" id="857017"/>
<dbReference type="HOGENOM" id="CLU_071416_2_0_1"/>
<dbReference type="OMA" id="HQWISSI"/>
<dbReference type="GO" id="GO:0009507">
    <property type="term" value="C:chloroplast"/>
    <property type="evidence" value="ECO:0007669"/>
    <property type="project" value="UniProtKB-SubCell"/>
</dbReference>
<dbReference type="Gene3D" id="1.25.40.10">
    <property type="entry name" value="Tetratricopeptide repeat domain"/>
    <property type="match status" value="1"/>
</dbReference>
<dbReference type="InterPro" id="IPR011990">
    <property type="entry name" value="TPR-like_helical_dom_sf"/>
</dbReference>
<dbReference type="InterPro" id="IPR019734">
    <property type="entry name" value="TPR_rpt"/>
</dbReference>
<dbReference type="Pfam" id="PF13424">
    <property type="entry name" value="TPR_12"/>
    <property type="match status" value="1"/>
</dbReference>
<dbReference type="SMART" id="SM00028">
    <property type="entry name" value="TPR"/>
    <property type="match status" value="3"/>
</dbReference>
<dbReference type="SUPFAM" id="SSF48452">
    <property type="entry name" value="TPR-like"/>
    <property type="match status" value="1"/>
</dbReference>
<dbReference type="PROSITE" id="PS50005">
    <property type="entry name" value="TPR"/>
    <property type="match status" value="3"/>
</dbReference>
<dbReference type="PROSITE" id="PS50293">
    <property type="entry name" value="TPR_REGION"/>
    <property type="match status" value="1"/>
</dbReference>
<proteinExistence type="inferred from homology"/>
<organism>
    <name type="scientific">Guillardia theta</name>
    <name type="common">Cryptophyte</name>
    <name type="synonym">Cryptomonas phi</name>
    <dbReference type="NCBI Taxonomy" id="55529"/>
    <lineage>
        <taxon>Eukaryota</taxon>
        <taxon>Cryptophyceae</taxon>
        <taxon>Pyrenomonadales</taxon>
        <taxon>Geminigeraceae</taxon>
        <taxon>Guillardia</taxon>
    </lineage>
</organism>
<accession>O78458</accession>
<gene>
    <name type="primary">ycf37</name>
</gene>
<feature type="chain" id="PRO_0000217356" description="Uncharacterized protein ycf37">
    <location>
        <begin position="1"/>
        <end position="178"/>
    </location>
</feature>
<feature type="repeat" description="TPR 1">
    <location>
        <begin position="52"/>
        <end position="85"/>
    </location>
</feature>
<feature type="repeat" description="TPR 2">
    <location>
        <begin position="91"/>
        <end position="124"/>
    </location>
</feature>
<feature type="repeat" description="TPR 3">
    <location>
        <begin position="125"/>
        <end position="158"/>
    </location>
</feature>
<evidence type="ECO:0000305" key="1"/>
<geneLocation type="chloroplast"/>
<reference key="1">
    <citation type="journal article" date="1999" name="J. Mol. Evol.">
        <title>The plastid genome of the cryptophyte alga, Guillardia theta: complete sequence and conserved synteny groups confirm its common ancestry with red algae.</title>
        <authorList>
            <person name="Douglas S.E."/>
            <person name="Penny S.L."/>
        </authorList>
    </citation>
    <scope>NUCLEOTIDE SEQUENCE [LARGE SCALE GENOMIC DNA]</scope>
</reference>